<reference key="1">
    <citation type="journal article" date="1990" name="Mol. Gen. Genet.">
        <title>Sequence, organization and expression of the core histone genes of Aspergillus nidulans.</title>
        <authorList>
            <person name="Ehinger A."/>
            <person name="Denison S.H."/>
            <person name="May G.S."/>
        </authorList>
    </citation>
    <scope>NUCLEOTIDE SEQUENCE [GENOMIC DNA]</scope>
    <source>
        <strain>R153</strain>
    </source>
</reference>
<reference key="2">
    <citation type="journal article" date="2005" name="Nature">
        <title>Sequencing of Aspergillus nidulans and comparative analysis with A. fumigatus and A. oryzae.</title>
        <authorList>
            <person name="Galagan J.E."/>
            <person name="Calvo S.E."/>
            <person name="Cuomo C."/>
            <person name="Ma L.-J."/>
            <person name="Wortman J.R."/>
            <person name="Batzoglou S."/>
            <person name="Lee S.-I."/>
            <person name="Bastuerkmen M."/>
            <person name="Spevak C.C."/>
            <person name="Clutterbuck J."/>
            <person name="Kapitonov V."/>
            <person name="Jurka J."/>
            <person name="Scazzocchio C."/>
            <person name="Farman M.L."/>
            <person name="Butler J."/>
            <person name="Purcell S."/>
            <person name="Harris S."/>
            <person name="Braus G.H."/>
            <person name="Draht O."/>
            <person name="Busch S."/>
            <person name="D'Enfert C."/>
            <person name="Bouchier C."/>
            <person name="Goldman G.H."/>
            <person name="Bell-Pedersen D."/>
            <person name="Griffiths-Jones S."/>
            <person name="Doonan J.H."/>
            <person name="Yu J."/>
            <person name="Vienken K."/>
            <person name="Pain A."/>
            <person name="Freitag M."/>
            <person name="Selker E.U."/>
            <person name="Archer D.B."/>
            <person name="Penalva M.A."/>
            <person name="Oakley B.R."/>
            <person name="Momany M."/>
            <person name="Tanaka T."/>
            <person name="Kumagai T."/>
            <person name="Asai K."/>
            <person name="Machida M."/>
            <person name="Nierman W.C."/>
            <person name="Denning D.W."/>
            <person name="Caddick M.X."/>
            <person name="Hynes M."/>
            <person name="Paoletti M."/>
            <person name="Fischer R."/>
            <person name="Miller B.L."/>
            <person name="Dyer P.S."/>
            <person name="Sachs M.S."/>
            <person name="Osmani S.A."/>
            <person name="Birren B.W."/>
        </authorList>
    </citation>
    <scope>NUCLEOTIDE SEQUENCE [LARGE SCALE GENOMIC DNA]</scope>
    <source>
        <strain>FGSC A4 / ATCC 38163 / CBS 112.46 / NRRL 194 / M139</strain>
    </source>
</reference>
<reference key="3">
    <citation type="journal article" date="2009" name="Fungal Genet. Biol.">
        <title>The 2008 update of the Aspergillus nidulans genome annotation: a community effort.</title>
        <authorList>
            <person name="Wortman J.R."/>
            <person name="Gilsenan J.M."/>
            <person name="Joardar V."/>
            <person name="Deegan J."/>
            <person name="Clutterbuck J."/>
            <person name="Andersen M.R."/>
            <person name="Archer D."/>
            <person name="Bencina M."/>
            <person name="Braus G."/>
            <person name="Coutinho P."/>
            <person name="von Dohren H."/>
            <person name="Doonan J."/>
            <person name="Driessen A.J."/>
            <person name="Durek P."/>
            <person name="Espeso E."/>
            <person name="Fekete E."/>
            <person name="Flipphi M."/>
            <person name="Estrada C.G."/>
            <person name="Geysens S."/>
            <person name="Goldman G."/>
            <person name="de Groot P.W."/>
            <person name="Hansen K."/>
            <person name="Harris S.D."/>
            <person name="Heinekamp T."/>
            <person name="Helmstaedt K."/>
            <person name="Henrissat B."/>
            <person name="Hofmann G."/>
            <person name="Homan T."/>
            <person name="Horio T."/>
            <person name="Horiuchi H."/>
            <person name="James S."/>
            <person name="Jones M."/>
            <person name="Karaffa L."/>
            <person name="Karanyi Z."/>
            <person name="Kato M."/>
            <person name="Keller N."/>
            <person name="Kelly D.E."/>
            <person name="Kiel J.A."/>
            <person name="Kim J.M."/>
            <person name="van der Klei I.J."/>
            <person name="Klis F.M."/>
            <person name="Kovalchuk A."/>
            <person name="Krasevec N."/>
            <person name="Kubicek C.P."/>
            <person name="Liu B."/>
            <person name="Maccabe A."/>
            <person name="Meyer V."/>
            <person name="Mirabito P."/>
            <person name="Miskei M."/>
            <person name="Mos M."/>
            <person name="Mullins J."/>
            <person name="Nelson D.R."/>
            <person name="Nielsen J."/>
            <person name="Oakley B.R."/>
            <person name="Osmani S.A."/>
            <person name="Pakula T."/>
            <person name="Paszewski A."/>
            <person name="Paulsen I."/>
            <person name="Pilsyk S."/>
            <person name="Pocsi I."/>
            <person name="Punt P.J."/>
            <person name="Ram A.F."/>
            <person name="Ren Q."/>
            <person name="Robellet X."/>
            <person name="Robson G."/>
            <person name="Seiboth B."/>
            <person name="van Solingen P."/>
            <person name="Specht T."/>
            <person name="Sun J."/>
            <person name="Taheri-Talesh N."/>
            <person name="Takeshita N."/>
            <person name="Ussery D."/>
            <person name="vanKuyk P.A."/>
            <person name="Visser H."/>
            <person name="van de Vondervoort P.J."/>
            <person name="de Vries R.P."/>
            <person name="Walton J."/>
            <person name="Xiang X."/>
            <person name="Xiong Y."/>
            <person name="Zeng A.P."/>
            <person name="Brandt B.W."/>
            <person name="Cornell M.J."/>
            <person name="van den Hondel C.A."/>
            <person name="Visser J."/>
            <person name="Oliver S.G."/>
            <person name="Turner G."/>
        </authorList>
    </citation>
    <scope>GENOME REANNOTATION</scope>
    <source>
        <strain>FGSC A4 / ATCC 38163 / CBS 112.46 / NRRL 194 / M139</strain>
    </source>
</reference>
<reference key="4">
    <citation type="journal article" date="2023" name="Nat. Commun.">
        <title>A seven-transmembrane methyltransferase catalysing N-terminal histidine methylation of lytic polysaccharide monooxygenases.</title>
        <authorList>
            <person name="Batth T.S."/>
            <person name="Simonsen J.L."/>
            <person name="Hernandez-Rollan C."/>
            <person name="Brander S."/>
            <person name="Morth J.P."/>
            <person name="Johansen K.S."/>
            <person name="Noerholm M.H.H."/>
            <person name="Hoof J.B."/>
            <person name="Olsen J.V."/>
        </authorList>
    </citation>
    <scope>METHYLATION AT HIS-40</scope>
</reference>
<keyword id="KW-0007">Acetylation</keyword>
<keyword id="KW-0158">Chromosome</keyword>
<keyword id="KW-0238">DNA-binding</keyword>
<keyword id="KW-0488">Methylation</keyword>
<keyword id="KW-0544">Nucleosome core</keyword>
<keyword id="KW-0539">Nucleus</keyword>
<keyword id="KW-0597">Phosphoprotein</keyword>
<keyword id="KW-1185">Reference proteome</keyword>
<organism>
    <name type="scientific">Emericella nidulans (strain FGSC A4 / ATCC 38163 / CBS 112.46 / NRRL 194 / M139)</name>
    <name type="common">Aspergillus nidulans</name>
    <dbReference type="NCBI Taxonomy" id="227321"/>
    <lineage>
        <taxon>Eukaryota</taxon>
        <taxon>Fungi</taxon>
        <taxon>Dikarya</taxon>
        <taxon>Ascomycota</taxon>
        <taxon>Pezizomycotina</taxon>
        <taxon>Eurotiomycetes</taxon>
        <taxon>Eurotiomycetidae</taxon>
        <taxon>Eurotiales</taxon>
        <taxon>Aspergillaceae</taxon>
        <taxon>Aspergillus</taxon>
        <taxon>Aspergillus subgen. Nidulantes</taxon>
    </lineage>
</organism>
<proteinExistence type="evidence at protein level"/>
<sequence length="136" mass="15333">MARTKQTARKSTGGKAPRKQLASKAARKAAPSTGGVKKPHRYKPGTVALREIRRYQKSTELLIRKLPFQRLVREIAQDFKSDLRFQSSAIGALQESVEAYLVSLFEDTNLCAIHAKRVTIQSKDIQLARRLRGERS</sequence>
<name>H3_EMENI</name>
<accession>P23753</accession>
<accession>C8VRA1</accession>
<accession>Q12605</accession>
<accession>Q5BFE7</accession>
<dbReference type="EMBL" id="U12630">
    <property type="protein sequence ID" value="AAA20819.1"/>
    <property type="status" value="ALT_SEQ"/>
    <property type="molecule type" value="Genomic_DNA"/>
</dbReference>
<dbReference type="EMBL" id="X55548">
    <property type="protein sequence ID" value="CAA39154.1"/>
    <property type="molecule type" value="Genomic_DNA"/>
</dbReference>
<dbReference type="EMBL" id="AACD01000012">
    <property type="protein sequence ID" value="EAA65375.1"/>
    <property type="status" value="ALT_SEQ"/>
    <property type="molecule type" value="Genomic_DNA"/>
</dbReference>
<dbReference type="EMBL" id="BN001308">
    <property type="protein sequence ID" value="CBF88887.1"/>
    <property type="molecule type" value="Genomic_DNA"/>
</dbReference>
<dbReference type="PIR" id="S11938">
    <property type="entry name" value="S11938"/>
</dbReference>
<dbReference type="RefSeq" id="XP_658337.1">
    <property type="nucleotide sequence ID" value="XM_653245.1"/>
</dbReference>
<dbReference type="SMR" id="P23753"/>
<dbReference type="FunCoup" id="P23753">
    <property type="interactions" value="831"/>
</dbReference>
<dbReference type="STRING" id="227321.P23753"/>
<dbReference type="EnsemblFungi" id="CBF88887">
    <property type="protein sequence ID" value="CBF88887"/>
    <property type="gene ID" value="ANIA_00733"/>
</dbReference>
<dbReference type="VEuPathDB" id="FungiDB:AN0733"/>
<dbReference type="eggNOG" id="KOG1745">
    <property type="taxonomic scope" value="Eukaryota"/>
</dbReference>
<dbReference type="HOGENOM" id="CLU_078295_4_0_1"/>
<dbReference type="InParanoid" id="P23753"/>
<dbReference type="OMA" id="HIFAEMA"/>
<dbReference type="OrthoDB" id="842664at2759"/>
<dbReference type="Proteomes" id="UP000000560">
    <property type="component" value="Chromosome VIII"/>
</dbReference>
<dbReference type="GO" id="GO:0000786">
    <property type="term" value="C:nucleosome"/>
    <property type="evidence" value="ECO:0007669"/>
    <property type="project" value="UniProtKB-KW"/>
</dbReference>
<dbReference type="GO" id="GO:0005634">
    <property type="term" value="C:nucleus"/>
    <property type="evidence" value="ECO:0000318"/>
    <property type="project" value="GO_Central"/>
</dbReference>
<dbReference type="GO" id="GO:0003677">
    <property type="term" value="F:DNA binding"/>
    <property type="evidence" value="ECO:0007669"/>
    <property type="project" value="UniProtKB-KW"/>
</dbReference>
<dbReference type="GO" id="GO:0046982">
    <property type="term" value="F:protein heterodimerization activity"/>
    <property type="evidence" value="ECO:0007669"/>
    <property type="project" value="InterPro"/>
</dbReference>
<dbReference type="GO" id="GO:0030527">
    <property type="term" value="F:structural constituent of chromatin"/>
    <property type="evidence" value="ECO:0007669"/>
    <property type="project" value="InterPro"/>
</dbReference>
<dbReference type="GO" id="GO:0009303">
    <property type="term" value="P:rRNA transcription"/>
    <property type="evidence" value="ECO:0000318"/>
    <property type="project" value="GO_Central"/>
</dbReference>
<dbReference type="CDD" id="cd22911">
    <property type="entry name" value="HFD_H3"/>
    <property type="match status" value="1"/>
</dbReference>
<dbReference type="FunFam" id="1.10.20.10:FF:000010">
    <property type="entry name" value="Histone H3"/>
    <property type="match status" value="1"/>
</dbReference>
<dbReference type="Gene3D" id="1.10.20.10">
    <property type="entry name" value="Histone, subunit A"/>
    <property type="match status" value="1"/>
</dbReference>
<dbReference type="InterPro" id="IPR009072">
    <property type="entry name" value="Histone-fold"/>
</dbReference>
<dbReference type="InterPro" id="IPR007125">
    <property type="entry name" value="Histone_H2A/H2B/H3"/>
</dbReference>
<dbReference type="InterPro" id="IPR000164">
    <property type="entry name" value="Histone_H3/CENP-A"/>
</dbReference>
<dbReference type="PANTHER" id="PTHR11426">
    <property type="entry name" value="HISTONE H3"/>
    <property type="match status" value="1"/>
</dbReference>
<dbReference type="Pfam" id="PF00125">
    <property type="entry name" value="Histone"/>
    <property type="match status" value="1"/>
</dbReference>
<dbReference type="PRINTS" id="PR00622">
    <property type="entry name" value="HISTONEH3"/>
</dbReference>
<dbReference type="SMART" id="SM00428">
    <property type="entry name" value="H3"/>
    <property type="match status" value="1"/>
</dbReference>
<dbReference type="SUPFAM" id="SSF47113">
    <property type="entry name" value="Histone-fold"/>
    <property type="match status" value="1"/>
</dbReference>
<dbReference type="PROSITE" id="PS00322">
    <property type="entry name" value="HISTONE_H3_1"/>
    <property type="match status" value="1"/>
</dbReference>
<dbReference type="PROSITE" id="PS00959">
    <property type="entry name" value="HISTONE_H3_2"/>
    <property type="match status" value="1"/>
</dbReference>
<evidence type="ECO:0000250" key="1"/>
<evidence type="ECO:0000256" key="2">
    <source>
        <dbReference type="SAM" id="MobiDB-lite"/>
    </source>
</evidence>
<evidence type="ECO:0000269" key="3">
    <source>
    </source>
</evidence>
<evidence type="ECO:0000305" key="4"/>
<comment type="function">
    <text>Core component of nucleosome. Nucleosomes wrap and compact DNA into chromatin, limiting DNA accessibility to the cellular machineries which require DNA as a template. Histones thereby play a central role in transcription regulation, DNA repair, DNA replication and chromosomal stability. DNA accessibility is regulated via a complex set of post-translational modifications of histones, also called histone code, and nucleosome remodeling.</text>
</comment>
<comment type="subunit">
    <text>The nucleosome is a histone octamer containing two molecules each of H2A, H2B, H3 and H4 assembled in one H3-H4 heterotetramer and two H2A-H2B heterodimers. The octamer wraps approximately 147 bp of DNA.</text>
</comment>
<comment type="subcellular location">
    <subcellularLocation>
        <location evidence="1">Nucleus</location>
    </subcellularLocation>
    <subcellularLocation>
        <location evidence="1">Chromosome</location>
    </subcellularLocation>
</comment>
<comment type="PTM">
    <text evidence="1">Phosphorylated to form H3S10ph. H3S10ph promotes subsequent H3K14ac formation and is required for transcriptional activation through TBP recruitment to the promoters (By similarity).</text>
</comment>
<comment type="PTM">
    <text evidence="1">Mono-, di- and trimethylated by the COMPASS complex to form H3K4me1/2/3. H3K4me activates gene expression by regulating transcription elongation and plays a role in telomere length maintenance. H3K4me enrichment correlates with transcription levels, and occurs in a 5' to 3' gradient with H3K4me3 enrichment at the 5'-end of genes, shifting to H3K4me2 and then H3K4me1. Methylated by set2 to form H3K36me. H3K36me represses gene expression. Methylated by dot1 to form H3K79me. H3K79me is required for association of SIR proteins with telomeric regions and for telomeric silencing. The COMPASS-mediated formation of H3K4me2/3 and the dot1-mediated formation of H3K79me require H2BK123ub1 (By similarity).</text>
</comment>
<comment type="PTM">
    <text evidence="1">Acetylation of histone H3 leads to transcriptional activation. H3K14ac formation by gcn5 is promoted by H3S10ph. H3K14ac can also be formed by esa1. H3K56ac formation occurs predominantly in newly synthesized H3 molecules during G1, S and G2/M of the cell cycle and may be involved in DNA repair (By similarity).</text>
</comment>
<comment type="similarity">
    <text evidence="4">Belongs to the histone H3 family.</text>
</comment>
<comment type="caution">
    <text evidence="4">To ensure consistency between histone entries, we follow the 'Brno' nomenclature for histone modifications, with positions referring to those used in the literature for the 'closest' model organism. Due to slight variations in histone sequences between organisms and to the presence of initiator methionine in UniProtKB/Swiss-Prot sequences, the actual positions of modified amino acids in the sequence generally differ. In this entry the following conventions are used: H3K4me1/2/3 = mono-, di- and trimethylated Lys-5; H3K9ac = acetylated Lys-10; H3K9me1 = monomethylated Lys-10; H3S10ph = phosphorylated Ser-11; H3K14ac = acetylated Lys-15; H3K14me2 = dimethylated Lys-15; H3K18ac = acetylated Lys-19; H3K18me1 = monomethylated Lys-19; H3K23ac = acetylated Lys-24; H3K23me1 = monomethylated Lys-24; H3K27ac = acetylated Lys-28; H3K27me1/2/3 = mono-, di- and trimethylated Lys-28; H3K36ac = acetylated Lys-37; H3K36me1/2/3 = mono-, di- and trimethylated Lys-37; H3K56ac = acetylated Lys-57; H3K64ac = acetylated Lys-65; H3K79me1/2/3 = mono-, di- and trimethylated Lys-80.</text>
</comment>
<comment type="sequence caution" evidence="4">
    <conflict type="erroneous gene model prediction">
        <sequence resource="EMBL-CDS" id="AAA20819"/>
    </conflict>
</comment>
<comment type="sequence caution" evidence="4">
    <conflict type="erroneous gene model prediction">
        <sequence resource="EMBL-CDS" id="EAA65375"/>
    </conflict>
</comment>
<gene>
    <name type="primary">hhtA</name>
    <name type="ORF">AN0733</name>
</gene>
<feature type="initiator methionine" description="Removed" evidence="1">
    <location>
        <position position="1"/>
    </location>
</feature>
<feature type="chain" id="PRO_0000221359" description="Histone H3">
    <location>
        <begin position="2"/>
        <end position="136"/>
    </location>
</feature>
<feature type="region of interest" description="Disordered" evidence="2">
    <location>
        <begin position="1"/>
        <end position="43"/>
    </location>
</feature>
<feature type="modified residue" description="N6,N6,N6-trimethyllysine; alternate" evidence="1">
    <location>
        <position position="5"/>
    </location>
</feature>
<feature type="modified residue" description="N6,N6-dimethyllysine; alternate" evidence="1">
    <location>
        <position position="5"/>
    </location>
</feature>
<feature type="modified residue" description="N6-methyllysine; alternate" evidence="1">
    <location>
        <position position="5"/>
    </location>
</feature>
<feature type="modified residue" description="N6-acetyllysine; alternate" evidence="1">
    <location>
        <position position="10"/>
    </location>
</feature>
<feature type="modified residue" description="N6-methyllysine; alternate" evidence="1">
    <location>
        <position position="10"/>
    </location>
</feature>
<feature type="modified residue" description="Phosphoserine" evidence="1">
    <location>
        <position position="11"/>
    </location>
</feature>
<feature type="modified residue" description="N6,N6-dimethyllysine; alternate" evidence="1">
    <location>
        <position position="15"/>
    </location>
</feature>
<feature type="modified residue" description="N6-acetyllysine; alternate" evidence="1">
    <location>
        <position position="15"/>
    </location>
</feature>
<feature type="modified residue" description="N6-methylated lysine; alternate" evidence="1">
    <location>
        <position position="15"/>
    </location>
</feature>
<feature type="modified residue" description="N6-acetyllysine; alternate" evidence="1">
    <location>
        <position position="19"/>
    </location>
</feature>
<feature type="modified residue" description="N6-methyllysine; alternate" evidence="1">
    <location>
        <position position="19"/>
    </location>
</feature>
<feature type="modified residue" description="N6-acetyllysine; alternate" evidence="1">
    <location>
        <position position="24"/>
    </location>
</feature>
<feature type="modified residue" description="N6-methyllysine; alternate" evidence="1">
    <location>
        <position position="24"/>
    </location>
</feature>
<feature type="modified residue" description="N6,N6,N6-trimethyllysine; alternate" evidence="1">
    <location>
        <position position="28"/>
    </location>
</feature>
<feature type="modified residue" description="N6,N6-dimethyllysine; alternate" evidence="1">
    <location>
        <position position="28"/>
    </location>
</feature>
<feature type="modified residue" description="N6-acetyllysine; alternate" evidence="1">
    <location>
        <position position="28"/>
    </location>
</feature>
<feature type="modified residue" description="N6-methyllysine; alternate" evidence="1">
    <location>
        <position position="28"/>
    </location>
</feature>
<feature type="modified residue" description="N6,N6,N6-trimethyllysine; alternate" evidence="1">
    <location>
        <position position="37"/>
    </location>
</feature>
<feature type="modified residue" description="N6,N6-dimethyllysine; alternate" evidence="1">
    <location>
        <position position="37"/>
    </location>
</feature>
<feature type="modified residue" description="N6-acetyllysine; alternate" evidence="1">
    <location>
        <position position="37"/>
    </location>
</feature>
<feature type="modified residue" description="N6-methyllysine; alternate" evidence="1">
    <location>
        <position position="37"/>
    </location>
</feature>
<feature type="modified residue" description="Methylhistidine" evidence="3">
    <location>
        <position position="40"/>
    </location>
</feature>
<feature type="modified residue" description="N6-acetyllysine" evidence="1">
    <location>
        <position position="57"/>
    </location>
</feature>
<feature type="modified residue" description="N6-acetyllysine" evidence="1">
    <location>
        <position position="65"/>
    </location>
</feature>
<feature type="modified residue" description="N6,N6,N6-trimethyllysine; alternate" evidence="1">
    <location>
        <position position="80"/>
    </location>
</feature>
<feature type="modified residue" description="N6,N6-dimethyllysine; alternate" evidence="1">
    <location>
        <position position="80"/>
    </location>
</feature>
<feature type="modified residue" description="N6-methyllysine; alternate" evidence="1">
    <location>
        <position position="80"/>
    </location>
</feature>
<protein>
    <recommendedName>
        <fullName>Histone H3</fullName>
    </recommendedName>
</protein>